<evidence type="ECO:0000250" key="1"/>
<evidence type="ECO:0000255" key="2"/>
<evidence type="ECO:0000305" key="3"/>
<gene>
    <name type="primary">AIM36</name>
    <name type="synonym">FMP39</name>
    <name type="ORF">C1Q_02491</name>
</gene>
<comment type="subcellular location">
    <subcellularLocation>
        <location evidence="1">Mitochondrion membrane</location>
        <topology evidence="1">Single-pass membrane protein</topology>
    </subcellularLocation>
</comment>
<comment type="similarity">
    <text evidence="3">Belongs to the AIM36 family.</text>
</comment>
<dbReference type="EMBL" id="ACFL01000115">
    <property type="protein sequence ID" value="EEU07034.1"/>
    <property type="molecule type" value="Genomic_DNA"/>
</dbReference>
<dbReference type="SMR" id="C7GQ96"/>
<dbReference type="Proteomes" id="UP000008073">
    <property type="component" value="Unassembled WGS sequence"/>
</dbReference>
<dbReference type="GO" id="GO:0031966">
    <property type="term" value="C:mitochondrial membrane"/>
    <property type="evidence" value="ECO:0007669"/>
    <property type="project" value="UniProtKB-SubCell"/>
</dbReference>
<accession>C7GQ96</accession>
<keyword id="KW-0472">Membrane</keyword>
<keyword id="KW-0496">Mitochondrion</keyword>
<keyword id="KW-0809">Transit peptide</keyword>
<keyword id="KW-0812">Transmembrane</keyword>
<keyword id="KW-1133">Transmembrane helix</keyword>
<feature type="transit peptide" description="Mitochondrion" evidence="2">
    <location>
        <begin position="1"/>
        <end position="40"/>
    </location>
</feature>
<feature type="chain" id="PRO_0000399732" description="Altered inheritance of mitochondria protein 36, mitochondrial">
    <location>
        <begin position="41"/>
        <end position="255"/>
    </location>
</feature>
<feature type="transmembrane region" description="Helical" evidence="2">
    <location>
        <begin position="64"/>
        <end position="82"/>
    </location>
</feature>
<name>AIM36_YEAS2</name>
<reference key="1">
    <citation type="journal article" date="2009" name="Genome Res.">
        <title>Genome structure of a Saccharomyces cerevisiae strain widely used in bioethanol production.</title>
        <authorList>
            <person name="Argueso J.L."/>
            <person name="Carazzolle M.F."/>
            <person name="Mieczkowski P.A."/>
            <person name="Duarte F.M."/>
            <person name="Netto O.V.C."/>
            <person name="Missawa S.K."/>
            <person name="Galzerani F."/>
            <person name="Costa G.G.L."/>
            <person name="Vidal R.O."/>
            <person name="Noronha M.F."/>
            <person name="Dominska M."/>
            <person name="Andrietta M.G.S."/>
            <person name="Andrietta S.R."/>
            <person name="Cunha A.F."/>
            <person name="Gomes L.H."/>
            <person name="Tavares F.C.A."/>
            <person name="Alcarde A.R."/>
            <person name="Dietrich F.S."/>
            <person name="McCusker J.H."/>
            <person name="Petes T.D."/>
            <person name="Pereira G.A.G."/>
        </authorList>
    </citation>
    <scope>NUCLEOTIDE SEQUENCE [LARGE SCALE GENOMIC DNA]</scope>
    <source>
        <strain>JAY291</strain>
    </source>
</reference>
<proteinExistence type="inferred from homology"/>
<sequence>MLRPLRKSVLASCRHCFKVCGGLPQKQLPLFSPLLLRARYSSTDSSTKRSNKSDKIDAPGFKKIFLVAIIGTVIFVKTVQSLDKNKPKTTLSEEEFENVVKGLKRRVAIFPQGEVDIKFSLSPSIEETRKVLQKSQGDDINELQFVDPVKVIDYYRTLRDDRYEALLNEYYKKYGCDTYAYNLPTGMLVMLLGRYFKENFKAGDKLVVVNFPHSIADATRFENEVSIVSKIFVPRKLSGSDVCKYYETVGKADII</sequence>
<organism>
    <name type="scientific">Saccharomyces cerevisiae (strain JAY291)</name>
    <name type="common">Baker's yeast</name>
    <dbReference type="NCBI Taxonomy" id="574961"/>
    <lineage>
        <taxon>Eukaryota</taxon>
        <taxon>Fungi</taxon>
        <taxon>Dikarya</taxon>
        <taxon>Ascomycota</taxon>
        <taxon>Saccharomycotina</taxon>
        <taxon>Saccharomycetes</taxon>
        <taxon>Saccharomycetales</taxon>
        <taxon>Saccharomycetaceae</taxon>
        <taxon>Saccharomyces</taxon>
    </lineage>
</organism>
<protein>
    <recommendedName>
        <fullName>Altered inheritance of mitochondria protein 36, mitochondrial</fullName>
    </recommendedName>
    <alternativeName>
        <fullName>Found in mitochondria protein 39</fullName>
    </alternativeName>
</protein>